<comment type="catalytic activity">
    <reaction>
        <text>1-(2-carboxyphenylamino)-1-deoxy-D-ribulose 5-phosphate + H(+) = (1S,2R)-1-C-(indol-3-yl)glycerol 3-phosphate + CO2 + H2O</text>
        <dbReference type="Rhea" id="RHEA:23476"/>
        <dbReference type="ChEBI" id="CHEBI:15377"/>
        <dbReference type="ChEBI" id="CHEBI:15378"/>
        <dbReference type="ChEBI" id="CHEBI:16526"/>
        <dbReference type="ChEBI" id="CHEBI:58613"/>
        <dbReference type="ChEBI" id="CHEBI:58866"/>
        <dbReference type="EC" id="4.1.1.48"/>
    </reaction>
</comment>
<comment type="pathway">
    <text>Amino-acid biosynthesis; L-tryptophan biosynthesis; L-tryptophan from chorismate: step 4/5.</text>
</comment>
<comment type="similarity">
    <text evidence="1">Belongs to the TrpC family.</text>
</comment>
<sequence length="273" mass="29373">MSDILTKIETYKREEIAAAKRAQPLSVVEATAKAQGAPRGFLRAIKAKHTNGDFALIAEVKKASPSKGLIRADFDPPQLAKAYEAGGAACLSVLTDTPSFQGHLDFMVAARAATSLPVLRKDFMFDAYQVVEARAHGADCILIIMAALDDATAKDLEDTAIAFGMDVLIEIHDRAELDRALKLRSPMIGVNNRNLRTFETTLATSEALAPLIPGDRLMVGESGIFTPADLARLERVGMSTFLVGESLMRQADVTAATRTLLARETTARATGTR</sequence>
<organism>
    <name type="scientific">Bradyrhizobium diazoefficiens (strain JCM 10833 / BCRC 13528 / IAM 13628 / NBRC 14792 / USDA 110)</name>
    <dbReference type="NCBI Taxonomy" id="224911"/>
    <lineage>
        <taxon>Bacteria</taxon>
        <taxon>Pseudomonadati</taxon>
        <taxon>Pseudomonadota</taxon>
        <taxon>Alphaproteobacteria</taxon>
        <taxon>Hyphomicrobiales</taxon>
        <taxon>Nitrobacteraceae</taxon>
        <taxon>Bradyrhizobium</taxon>
    </lineage>
</organism>
<protein>
    <recommendedName>
        <fullName>Indole-3-glycerol phosphate synthase</fullName>
        <shortName>IGPS</shortName>
        <ecNumber>4.1.1.48</ecNumber>
    </recommendedName>
</protein>
<gene>
    <name type="primary">trpC</name>
    <name type="ordered locus">blr4810</name>
</gene>
<proteinExistence type="inferred from homology"/>
<reference key="1">
    <citation type="journal article" date="1997" name="Biochim. Biophys. Acta">
        <title>The sequence of a symbiotically essential Bradyrhizobium japonicum operon consisting of trpD, trpC and a moaC-like gene.</title>
        <authorList>
            <person name="Kuykendall L.D."/>
            <person name="Hunter W.J."/>
        </authorList>
    </citation>
    <scope>NUCLEOTIDE SEQUENCE [GENOMIC DNA]</scope>
    <source>
        <strain>JCM 10833 / BCRC 13528 / IAM 13628 / NBRC 14792 / USDA 110</strain>
    </source>
</reference>
<reference key="2">
    <citation type="journal article" date="2002" name="DNA Res.">
        <title>Complete genomic sequence of nitrogen-fixing symbiotic bacterium Bradyrhizobium japonicum USDA110.</title>
        <authorList>
            <person name="Kaneko T."/>
            <person name="Nakamura Y."/>
            <person name="Sato S."/>
            <person name="Minamisawa K."/>
            <person name="Uchiumi T."/>
            <person name="Sasamoto S."/>
            <person name="Watanabe A."/>
            <person name="Idesawa K."/>
            <person name="Iriguchi M."/>
            <person name="Kawashima K."/>
            <person name="Kohara M."/>
            <person name="Matsumoto M."/>
            <person name="Shimpo S."/>
            <person name="Tsuruoka H."/>
            <person name="Wada T."/>
            <person name="Yamada M."/>
            <person name="Tabata S."/>
        </authorList>
    </citation>
    <scope>NUCLEOTIDE SEQUENCE [LARGE SCALE GENOMIC DNA]</scope>
    <source>
        <strain>JCM 10833 / BCRC 13528 / IAM 13628 / NBRC 14792 / USDA 110</strain>
    </source>
</reference>
<feature type="chain" id="PRO_0000154215" description="Indole-3-glycerol phosphate synthase">
    <location>
        <begin position="1"/>
        <end position="273"/>
    </location>
</feature>
<feature type="sequence conflict" description="In Ref. 1; AAB39010." evidence="1" ref="1">
    <original>L</original>
    <variation>F</variation>
    <location>
        <position position="79"/>
    </location>
</feature>
<feature type="sequence conflict" description="In Ref. 1; AAB39010." evidence="1" ref="1">
    <original>A</original>
    <variation>T</variation>
    <location>
        <position position="146"/>
    </location>
</feature>
<keyword id="KW-0028">Amino-acid biosynthesis</keyword>
<keyword id="KW-0057">Aromatic amino acid biosynthesis</keyword>
<keyword id="KW-0210">Decarboxylase</keyword>
<keyword id="KW-0456">Lyase</keyword>
<keyword id="KW-1185">Reference proteome</keyword>
<keyword id="KW-0822">Tryptophan biosynthesis</keyword>
<dbReference type="EC" id="4.1.1.48"/>
<dbReference type="EMBL" id="U79771">
    <property type="protein sequence ID" value="AAB39010.1"/>
    <property type="molecule type" value="Genomic_DNA"/>
</dbReference>
<dbReference type="EMBL" id="BA000040">
    <property type="protein sequence ID" value="BAC50075.1"/>
    <property type="molecule type" value="Genomic_DNA"/>
</dbReference>
<dbReference type="PIR" id="T46959">
    <property type="entry name" value="T46959"/>
</dbReference>
<dbReference type="RefSeq" id="NP_771450.1">
    <property type="nucleotide sequence ID" value="NC_004463.1"/>
</dbReference>
<dbReference type="RefSeq" id="WP_011087578.1">
    <property type="nucleotide sequence ID" value="NC_004463.1"/>
</dbReference>
<dbReference type="SMR" id="P94327"/>
<dbReference type="FunCoup" id="P94327">
    <property type="interactions" value="449"/>
</dbReference>
<dbReference type="STRING" id="224911.AAV28_21345"/>
<dbReference type="EnsemblBacteria" id="BAC50075">
    <property type="protein sequence ID" value="BAC50075"/>
    <property type="gene ID" value="BAC50075"/>
</dbReference>
<dbReference type="GeneID" id="46491815"/>
<dbReference type="KEGG" id="bja:blr4810"/>
<dbReference type="PATRIC" id="fig|224911.44.peg.4649"/>
<dbReference type="eggNOG" id="COG0134">
    <property type="taxonomic scope" value="Bacteria"/>
</dbReference>
<dbReference type="HOGENOM" id="CLU_034247_2_0_5"/>
<dbReference type="InParanoid" id="P94327"/>
<dbReference type="OrthoDB" id="9804217at2"/>
<dbReference type="PhylomeDB" id="P94327"/>
<dbReference type="UniPathway" id="UPA00035">
    <property type="reaction ID" value="UER00043"/>
</dbReference>
<dbReference type="Proteomes" id="UP000002526">
    <property type="component" value="Chromosome"/>
</dbReference>
<dbReference type="GO" id="GO:0004425">
    <property type="term" value="F:indole-3-glycerol-phosphate synthase activity"/>
    <property type="evidence" value="ECO:0000318"/>
    <property type="project" value="GO_Central"/>
</dbReference>
<dbReference type="GO" id="GO:0004640">
    <property type="term" value="F:phosphoribosylanthranilate isomerase activity"/>
    <property type="evidence" value="ECO:0000318"/>
    <property type="project" value="GO_Central"/>
</dbReference>
<dbReference type="GO" id="GO:0000162">
    <property type="term" value="P:L-tryptophan biosynthetic process"/>
    <property type="evidence" value="ECO:0000318"/>
    <property type="project" value="GO_Central"/>
</dbReference>
<dbReference type="CDD" id="cd00331">
    <property type="entry name" value="IGPS"/>
    <property type="match status" value="1"/>
</dbReference>
<dbReference type="FunFam" id="3.20.20.70:FF:000024">
    <property type="entry name" value="Indole-3-glycerol phosphate synthase"/>
    <property type="match status" value="1"/>
</dbReference>
<dbReference type="Gene3D" id="3.20.20.70">
    <property type="entry name" value="Aldolase class I"/>
    <property type="match status" value="1"/>
</dbReference>
<dbReference type="HAMAP" id="MF_00134_B">
    <property type="entry name" value="IGPS_B"/>
    <property type="match status" value="1"/>
</dbReference>
<dbReference type="InterPro" id="IPR013785">
    <property type="entry name" value="Aldolase_TIM"/>
</dbReference>
<dbReference type="InterPro" id="IPR045186">
    <property type="entry name" value="Indole-3-glycerol_P_synth"/>
</dbReference>
<dbReference type="InterPro" id="IPR013798">
    <property type="entry name" value="Indole-3-glycerol_P_synth_dom"/>
</dbReference>
<dbReference type="InterPro" id="IPR001468">
    <property type="entry name" value="Indole-3-GlycerolPSynthase_CS"/>
</dbReference>
<dbReference type="InterPro" id="IPR011060">
    <property type="entry name" value="RibuloseP-bd_barrel"/>
</dbReference>
<dbReference type="NCBIfam" id="NF001370">
    <property type="entry name" value="PRK00278.1-2"/>
    <property type="match status" value="1"/>
</dbReference>
<dbReference type="NCBIfam" id="NF001373">
    <property type="entry name" value="PRK00278.1-6"/>
    <property type="match status" value="1"/>
</dbReference>
<dbReference type="NCBIfam" id="NF001377">
    <property type="entry name" value="PRK00278.2-4"/>
    <property type="match status" value="1"/>
</dbReference>
<dbReference type="PANTHER" id="PTHR22854:SF2">
    <property type="entry name" value="INDOLE-3-GLYCEROL-PHOSPHATE SYNTHASE"/>
    <property type="match status" value="1"/>
</dbReference>
<dbReference type="PANTHER" id="PTHR22854">
    <property type="entry name" value="TRYPTOPHAN BIOSYNTHESIS PROTEIN"/>
    <property type="match status" value="1"/>
</dbReference>
<dbReference type="Pfam" id="PF00218">
    <property type="entry name" value="IGPS"/>
    <property type="match status" value="1"/>
</dbReference>
<dbReference type="SUPFAM" id="SSF51366">
    <property type="entry name" value="Ribulose-phoshate binding barrel"/>
    <property type="match status" value="1"/>
</dbReference>
<dbReference type="PROSITE" id="PS00614">
    <property type="entry name" value="IGPS"/>
    <property type="match status" value="1"/>
</dbReference>
<accession>P94327</accession>
<evidence type="ECO:0000305" key="1"/>
<name>TRPC_BRADU</name>